<dbReference type="EMBL" id="BC081726">
    <property type="protein sequence ID" value="AAH81726.1"/>
    <property type="molecule type" value="mRNA"/>
</dbReference>
<dbReference type="RefSeq" id="NP_001416607.1">
    <property type="nucleotide sequence ID" value="NM_001429678.1"/>
</dbReference>
<dbReference type="RefSeq" id="NP_001416608.1">
    <property type="nucleotide sequence ID" value="NM_001429679.1"/>
</dbReference>
<dbReference type="RefSeq" id="NP_001416609.1">
    <property type="nucleotide sequence ID" value="NM_001429680.1"/>
</dbReference>
<dbReference type="RefSeq" id="NP_612518.2">
    <property type="nucleotide sequence ID" value="NM_138509.4"/>
</dbReference>
<dbReference type="RefSeq" id="XP_006235356.1">
    <property type="nucleotide sequence ID" value="XM_006235294.3"/>
</dbReference>
<dbReference type="RefSeq" id="XP_006235357.1">
    <property type="nucleotide sequence ID" value="XM_006235295.3"/>
</dbReference>
<dbReference type="BMRB" id="Q66HR2"/>
<dbReference type="SMR" id="Q66HR2"/>
<dbReference type="BioGRID" id="250409">
    <property type="interactions" value="1"/>
</dbReference>
<dbReference type="FunCoup" id="Q66HR2">
    <property type="interactions" value="2617"/>
</dbReference>
<dbReference type="IntAct" id="Q66HR2">
    <property type="interactions" value="1"/>
</dbReference>
<dbReference type="MINT" id="Q66HR2"/>
<dbReference type="STRING" id="10116.ENSRNOP00000016220"/>
<dbReference type="iPTMnet" id="Q66HR2"/>
<dbReference type="PhosphoSitePlus" id="Q66HR2"/>
<dbReference type="jPOST" id="Q66HR2"/>
<dbReference type="PaxDb" id="10116-ENSRNOP00000016220"/>
<dbReference type="GeneID" id="114764"/>
<dbReference type="KEGG" id="rno:114764"/>
<dbReference type="UCSC" id="RGD:621781">
    <property type="organism name" value="rat"/>
</dbReference>
<dbReference type="AGR" id="RGD:621781"/>
<dbReference type="CTD" id="22919"/>
<dbReference type="RGD" id="621781">
    <property type="gene designation" value="Mapre1"/>
</dbReference>
<dbReference type="VEuPathDB" id="HostDB:ENSRNOG00000011798"/>
<dbReference type="eggNOG" id="KOG3000">
    <property type="taxonomic scope" value="Eukaryota"/>
</dbReference>
<dbReference type="HOGENOM" id="CLU_041744_1_1_1"/>
<dbReference type="InParanoid" id="Q66HR2"/>
<dbReference type="PhylomeDB" id="Q66HR2"/>
<dbReference type="TreeFam" id="TF313620"/>
<dbReference type="Reactome" id="R-RNO-141444">
    <property type="pathway name" value="Amplification of signal from unattached kinetochores via a MAD2 inhibitory signal"/>
</dbReference>
<dbReference type="Reactome" id="R-RNO-2467813">
    <property type="pathway name" value="Separation of Sister Chromatids"/>
</dbReference>
<dbReference type="Reactome" id="R-RNO-2500257">
    <property type="pathway name" value="Resolution of Sister Chromatid Cohesion"/>
</dbReference>
<dbReference type="Reactome" id="R-RNO-2565942">
    <property type="pathway name" value="Regulation of PLK1 Activity at G2/M Transition"/>
</dbReference>
<dbReference type="Reactome" id="R-RNO-380259">
    <property type="pathway name" value="Loss of Nlp from mitotic centrosomes"/>
</dbReference>
<dbReference type="Reactome" id="R-RNO-380270">
    <property type="pathway name" value="Recruitment of mitotic centrosome proteins and complexes"/>
</dbReference>
<dbReference type="Reactome" id="R-RNO-380284">
    <property type="pathway name" value="Loss of proteins required for interphase microtubule organization from the centrosome"/>
</dbReference>
<dbReference type="Reactome" id="R-RNO-380320">
    <property type="pathway name" value="Recruitment of NuMA to mitotic centrosomes"/>
</dbReference>
<dbReference type="Reactome" id="R-RNO-5620912">
    <property type="pathway name" value="Anchoring of the basal body to the plasma membrane"/>
</dbReference>
<dbReference type="Reactome" id="R-RNO-5663220">
    <property type="pathway name" value="RHO GTPases Activate Formins"/>
</dbReference>
<dbReference type="Reactome" id="R-RNO-68877">
    <property type="pathway name" value="Mitotic Prometaphase"/>
</dbReference>
<dbReference type="Reactome" id="R-RNO-8852276">
    <property type="pathway name" value="The role of GTSE1 in G2/M progression after G2 checkpoint"/>
</dbReference>
<dbReference type="Reactome" id="R-RNO-8854518">
    <property type="pathway name" value="AURKA Activation by TPX2"/>
</dbReference>
<dbReference type="Reactome" id="R-RNO-9648025">
    <property type="pathway name" value="EML4 and NUDC in mitotic spindle formation"/>
</dbReference>
<dbReference type="PRO" id="PR:Q66HR2"/>
<dbReference type="Proteomes" id="UP000002494">
    <property type="component" value="Chromosome 3"/>
</dbReference>
<dbReference type="Bgee" id="ENSRNOG00000011798">
    <property type="expression patterns" value="Expressed in thymus and 19 other cell types or tissues"/>
</dbReference>
<dbReference type="ExpressionAtlas" id="Q66HR2">
    <property type="expression patterns" value="baseline and differential"/>
</dbReference>
<dbReference type="GO" id="GO:0042995">
    <property type="term" value="C:cell projection"/>
    <property type="evidence" value="ECO:0000266"/>
    <property type="project" value="RGD"/>
</dbReference>
<dbReference type="GO" id="GO:0031253">
    <property type="term" value="C:cell projection membrane"/>
    <property type="evidence" value="ECO:0000266"/>
    <property type="project" value="RGD"/>
</dbReference>
<dbReference type="GO" id="GO:0005813">
    <property type="term" value="C:centrosome"/>
    <property type="evidence" value="ECO:0000266"/>
    <property type="project" value="RGD"/>
</dbReference>
<dbReference type="GO" id="GO:0036064">
    <property type="term" value="C:ciliary basal body"/>
    <property type="evidence" value="ECO:0000266"/>
    <property type="project" value="RGD"/>
</dbReference>
<dbReference type="GO" id="GO:0030981">
    <property type="term" value="C:cortical microtubule cytoskeleton"/>
    <property type="evidence" value="ECO:0000266"/>
    <property type="project" value="RGD"/>
</dbReference>
<dbReference type="GO" id="GO:0005881">
    <property type="term" value="C:cytoplasmic microtubule"/>
    <property type="evidence" value="ECO:0000318"/>
    <property type="project" value="GO_Central"/>
</dbReference>
<dbReference type="GO" id="GO:0005925">
    <property type="term" value="C:focal adhesion"/>
    <property type="evidence" value="ECO:0000266"/>
    <property type="project" value="RGD"/>
</dbReference>
<dbReference type="GO" id="GO:0005794">
    <property type="term" value="C:Golgi apparatus"/>
    <property type="evidence" value="ECO:0000266"/>
    <property type="project" value="RGD"/>
</dbReference>
<dbReference type="GO" id="GO:0005874">
    <property type="term" value="C:microtubule"/>
    <property type="evidence" value="ECO:0000250"/>
    <property type="project" value="UniProtKB"/>
</dbReference>
<dbReference type="GO" id="GO:0015630">
    <property type="term" value="C:microtubule cytoskeleton"/>
    <property type="evidence" value="ECO:0000266"/>
    <property type="project" value="RGD"/>
</dbReference>
<dbReference type="GO" id="GO:0005815">
    <property type="term" value="C:microtubule organizing center"/>
    <property type="evidence" value="ECO:0000318"/>
    <property type="project" value="GO_Central"/>
</dbReference>
<dbReference type="GO" id="GO:0035371">
    <property type="term" value="C:microtubule plus-end"/>
    <property type="evidence" value="ECO:0000266"/>
    <property type="project" value="RGD"/>
</dbReference>
<dbReference type="GO" id="GO:1905721">
    <property type="term" value="C:mitotic spindle astral microtubule end"/>
    <property type="evidence" value="ECO:0000266"/>
    <property type="project" value="RGD"/>
</dbReference>
<dbReference type="GO" id="GO:1990498">
    <property type="term" value="C:mitotic spindle microtubule"/>
    <property type="evidence" value="ECO:0000266"/>
    <property type="project" value="RGD"/>
</dbReference>
<dbReference type="GO" id="GO:0097431">
    <property type="term" value="C:mitotic spindle pole"/>
    <property type="evidence" value="ECO:0000250"/>
    <property type="project" value="UniProtKB"/>
</dbReference>
<dbReference type="GO" id="GO:0005819">
    <property type="term" value="C:spindle"/>
    <property type="evidence" value="ECO:0000266"/>
    <property type="project" value="RGD"/>
</dbReference>
<dbReference type="GO" id="GO:0051233">
    <property type="term" value="C:spindle midzone"/>
    <property type="evidence" value="ECO:0000318"/>
    <property type="project" value="GO_Central"/>
</dbReference>
<dbReference type="GO" id="GO:0042802">
    <property type="term" value="F:identical protein binding"/>
    <property type="evidence" value="ECO:0000266"/>
    <property type="project" value="RGD"/>
</dbReference>
<dbReference type="GO" id="GO:0051010">
    <property type="term" value="F:microtubule plus-end binding"/>
    <property type="evidence" value="ECO:0000314"/>
    <property type="project" value="UniProtKB"/>
</dbReference>
<dbReference type="GO" id="GO:0019901">
    <property type="term" value="F:protein kinase binding"/>
    <property type="evidence" value="ECO:0000266"/>
    <property type="project" value="RGD"/>
</dbReference>
<dbReference type="GO" id="GO:0051315">
    <property type="term" value="P:attachment of mitotic spindle microtubules to kinetochore"/>
    <property type="evidence" value="ECO:0000250"/>
    <property type="project" value="UniProtKB"/>
</dbReference>
<dbReference type="GO" id="GO:0051301">
    <property type="term" value="P:cell division"/>
    <property type="evidence" value="ECO:0007669"/>
    <property type="project" value="UniProtKB-KW"/>
</dbReference>
<dbReference type="GO" id="GO:0016477">
    <property type="term" value="P:cell migration"/>
    <property type="evidence" value="ECO:0000266"/>
    <property type="project" value="RGD"/>
</dbReference>
<dbReference type="GO" id="GO:0000132">
    <property type="term" value="P:establishment of mitotic spindle orientation"/>
    <property type="evidence" value="ECO:0000250"/>
    <property type="project" value="UniProtKB"/>
</dbReference>
<dbReference type="GO" id="GO:0001578">
    <property type="term" value="P:microtubule bundle formation"/>
    <property type="evidence" value="ECO:0000266"/>
    <property type="project" value="RGD"/>
</dbReference>
<dbReference type="GO" id="GO:0046785">
    <property type="term" value="P:microtubule polymerization"/>
    <property type="evidence" value="ECO:0000266"/>
    <property type="project" value="RGD"/>
</dbReference>
<dbReference type="GO" id="GO:0031115">
    <property type="term" value="P:negative regulation of microtubule polymerization"/>
    <property type="evidence" value="ECO:0000266"/>
    <property type="project" value="RGD"/>
</dbReference>
<dbReference type="GO" id="GO:1905515">
    <property type="term" value="P:non-motile cilium assembly"/>
    <property type="evidence" value="ECO:0000266"/>
    <property type="project" value="RGD"/>
</dbReference>
<dbReference type="GO" id="GO:0031116">
    <property type="term" value="P:positive regulation of microtubule polymerization"/>
    <property type="evidence" value="ECO:0000266"/>
    <property type="project" value="RGD"/>
</dbReference>
<dbReference type="GO" id="GO:1902888">
    <property type="term" value="P:protein localization to astral microtubule"/>
    <property type="evidence" value="ECO:0000250"/>
    <property type="project" value="UniProtKB"/>
</dbReference>
<dbReference type="GO" id="GO:0071539">
    <property type="term" value="P:protein localization to centrosome"/>
    <property type="evidence" value="ECO:0000266"/>
    <property type="project" value="RGD"/>
</dbReference>
<dbReference type="GO" id="GO:0035372">
    <property type="term" value="P:protein localization to microtubule"/>
    <property type="evidence" value="ECO:0000250"/>
    <property type="project" value="UniProtKB"/>
</dbReference>
<dbReference type="GO" id="GO:1902480">
    <property type="term" value="P:protein localization to mitotic spindle"/>
    <property type="evidence" value="ECO:0000266"/>
    <property type="project" value="RGD"/>
</dbReference>
<dbReference type="GO" id="GO:0031110">
    <property type="term" value="P:regulation of microtubule polymerization or depolymerization"/>
    <property type="evidence" value="ECO:0000318"/>
    <property type="project" value="GO_Central"/>
</dbReference>
<dbReference type="GO" id="GO:0051225">
    <property type="term" value="P:spindle assembly"/>
    <property type="evidence" value="ECO:0000318"/>
    <property type="project" value="GO_Central"/>
</dbReference>
<dbReference type="CDD" id="cd00014">
    <property type="entry name" value="CH_SF"/>
    <property type="match status" value="1"/>
</dbReference>
<dbReference type="FunFam" id="1.20.5.1430:FF:000001">
    <property type="entry name" value="microtubule-associated protein RP/EB family member 1"/>
    <property type="match status" value="1"/>
</dbReference>
<dbReference type="FunFam" id="1.10.418.10:FF:000007">
    <property type="entry name" value="Microtubule-associated protein, RP/EB family, member 2"/>
    <property type="match status" value="1"/>
</dbReference>
<dbReference type="Gene3D" id="1.20.5.1430">
    <property type="match status" value="1"/>
</dbReference>
<dbReference type="Gene3D" id="1.10.418.10">
    <property type="entry name" value="Calponin-like domain"/>
    <property type="match status" value="1"/>
</dbReference>
<dbReference type="InterPro" id="IPR001715">
    <property type="entry name" value="CH_dom"/>
</dbReference>
<dbReference type="InterPro" id="IPR036872">
    <property type="entry name" value="CH_dom_sf"/>
</dbReference>
<dbReference type="InterPro" id="IPR004953">
    <property type="entry name" value="EB1_C"/>
</dbReference>
<dbReference type="InterPro" id="IPR036133">
    <property type="entry name" value="EB1_C_sf"/>
</dbReference>
<dbReference type="InterPro" id="IPR027328">
    <property type="entry name" value="MAPRE"/>
</dbReference>
<dbReference type="PANTHER" id="PTHR10623">
    <property type="entry name" value="MICROTUBULE-ASSOCIATED PROTEIN RP/EB FAMILY MEMBER"/>
    <property type="match status" value="1"/>
</dbReference>
<dbReference type="Pfam" id="PF00307">
    <property type="entry name" value="CH"/>
    <property type="match status" value="1"/>
</dbReference>
<dbReference type="Pfam" id="PF03271">
    <property type="entry name" value="EB1"/>
    <property type="match status" value="1"/>
</dbReference>
<dbReference type="SUPFAM" id="SSF47576">
    <property type="entry name" value="Calponin-homology domain, CH-domain"/>
    <property type="match status" value="1"/>
</dbReference>
<dbReference type="SUPFAM" id="SSF140612">
    <property type="entry name" value="EB1 dimerisation domain-like"/>
    <property type="match status" value="1"/>
</dbReference>
<dbReference type="PROSITE" id="PS50021">
    <property type="entry name" value="CH"/>
    <property type="match status" value="1"/>
</dbReference>
<dbReference type="PROSITE" id="PS51230">
    <property type="entry name" value="EB1_C"/>
    <property type="match status" value="1"/>
</dbReference>
<proteinExistence type="evidence at protein level"/>
<comment type="function">
    <text evidence="1 2">Plus-end tracking protein (+TIP) that binds to the plus-end of microtubules and regulates the dynamics of the microtubule cytoskeleton. Recruits other +TIP proteins to microtubules by binding to a conserved Ser-X-Leu-Pro (SXLP) motif in their polypeptide chains. Promotes cytoplasmic microtubule nucleation and elongation. Involved in mitotic spindle positioning by stabilizing microtubules and promoting dynamic connection between astral microtubules and the cortex during mitotic chromosome segregation. Assists chromosome alignment in metaphase by recruiting the SKA complex to the spindle and stabilizing its interactions with microtubule bundles (K-fibers). Also acts as a regulator of minus-end microtubule organization: interacts with the complex formed by AKAP9 and PDE4DIP, leading to recruit CAMSAP2 to the Golgi apparatus, thereby tethering non-centrosomal minus-end microtubules to the Golgi, an important step for polarized cell movement. Promotes elongation of CAMSAP2-decorated microtubule stretches on the minus-end of microtubules. Acts as a regulator of autophagosome transport via interaction with CAMSAP2 (By similarity). Functions downstream of Rho GTPases and DIAPH1 in stable microtubule formation (By similarity). May play a role in cell migration (By similarity).</text>
</comment>
<comment type="subunit">
    <text evidence="1 2 6 7 10">Homodimer. Heterodimer with MAPRE3. Interacts with DCTN1, DCTN2, TERF1 and dynein intermediate chain (By similarity). Interaction with DIAPH1 and DIAPH2 (By similarity). Interacts (via C-terminal residues 206-211) with APC (via C-terminal residues 2674-2845); the interaction inhibits association with and bundling of F-actin (By similarity). Interacts with CLASP2, DST, KIF2C and STIM1; probably required for their targeting to the growing microtubule plus ends. Interacts with MTUS2; interaction is direct and probably targets MTUS2 to microtubules. Interacts (via C-terminus) with SKA1 (via SXIP motif); the interaction is direct and stabilizes the kinetochore-microtubule attachment of the SKA1 complex. Interacts with APC2. Interacts with CLASP1. Interacts with CDK5RAP2 (By similarity). According to another report, MAPRE1 does not interact with CDK5RAP2 (PubMed:19553473). Interacts with MACF1 (By similarity). Interacts with RABL2/RABL2A; binds preferentially to GTP-bound RABL2 (By similarity). Interacts with KCNAB2 (PubMed:21357749). Interacts (via C-terminus) with CLIP1. Interacts with SLAIN2 and SLAIN1. Interacts with KIF18B; this interaction is required for efficient accumulation of KIF18B at microtubule plus ends. Interacts with MISP. Interacts with KNSTRN. Interacts with NCKAP5L. Interacts with AKAP9. Interacts with PDE4DIP; this interaction, which is PDE4DIP isoform-specific, is required for its recruitment to the Golgi apparatus. Interacts with CAMSAP2 (By similarity). May form a pericentrosomal complex with AKAP9, CDK5RAP2 and PDE4DIP isoform 2/MMG8/SMYLE; within this complex, MAPRE1 binding to CDK5RAP2 may be mediated by PDE4DIP (By similarity). Contrary to other mammalian species, does not interact with CDK5RAP2, possibly due to the lack of conservation of the MAPRE1-binding motif in rat CDK5RAP2 (Probable). Interacts with AKNA (By similarity). Interacts with GAS2L1, GAS2L2, and GAS2L3 (By similarity). Interacts with RARRES1 and AGBL2 (By similarity).</text>
</comment>
<comment type="subcellular location">
    <subcellularLocation>
        <location evidence="1">Cytoplasm</location>
        <location evidence="1">Cytoskeleton</location>
    </subcellularLocation>
    <subcellularLocation>
        <location evidence="1">Cytoplasm</location>
        <location evidence="1">Cytoskeleton</location>
        <location evidence="1">Microtubule organizing center</location>
        <location evidence="1">Centrosome</location>
    </subcellularLocation>
    <subcellularLocation>
        <location evidence="1">Golgi apparatus</location>
    </subcellularLocation>
    <subcellularLocation>
        <location evidence="1">Cytoplasm</location>
        <location evidence="1">Cytoskeleton</location>
        <location evidence="1">Spindle</location>
    </subcellularLocation>
    <subcellularLocation>
        <location evidence="1">Cytoplasm</location>
        <location evidence="1">Cytoskeleton</location>
        <location evidence="1">Spindle pole</location>
    </subcellularLocation>
    <text evidence="1">Associated with the microtubule growing distal tips. In addition to localizing to microtubule plus-ends, also exhibits some localization along the length of the microtubules. Recruitment to the Golgi apparatus requires the presence of PDE4DIP isoform 13/MMG8/SMYLE.</text>
</comment>
<comment type="domain">
    <text evidence="1">Composed of two functionally independent domains. The N-terminal domain forms a hydrophobic cleft involved in microtubule binding and the C-terminal is involved in the formation of mutually exclusive complexes with APC and DCTN1.</text>
</comment>
<comment type="PTM">
    <text evidence="1">Acetylation at Lys-220 by KAT2B/PCAF promotes dynamic kinetochore-microtubule interactions in early mitosis.</text>
</comment>
<comment type="PTM">
    <text evidence="1">Crotonylated by KAT5 during mitosis, promoting astral microtubule plasticity and dynamic connection between astral microtubules and the cortex during mitotic chromosome segregation, thereby ensuring accurate spindle positioning in mitosis. Decrotonylated by HDAC3.</text>
</comment>
<comment type="similarity">
    <text evidence="9">Belongs to the MAPRE family.</text>
</comment>
<organism>
    <name type="scientific">Rattus norvegicus</name>
    <name type="common">Rat</name>
    <dbReference type="NCBI Taxonomy" id="10116"/>
    <lineage>
        <taxon>Eukaryota</taxon>
        <taxon>Metazoa</taxon>
        <taxon>Chordata</taxon>
        <taxon>Craniata</taxon>
        <taxon>Vertebrata</taxon>
        <taxon>Euteleostomi</taxon>
        <taxon>Mammalia</taxon>
        <taxon>Eutheria</taxon>
        <taxon>Euarchontoglires</taxon>
        <taxon>Glires</taxon>
        <taxon>Rodentia</taxon>
        <taxon>Myomorpha</taxon>
        <taxon>Muroidea</taxon>
        <taxon>Muridae</taxon>
        <taxon>Murinae</taxon>
        <taxon>Rattus</taxon>
    </lineage>
</organism>
<protein>
    <recommendedName>
        <fullName>Microtubule-associated protein RP/EB family member 1</fullName>
    </recommendedName>
    <alternativeName>
        <fullName>APC-binding protein EB1</fullName>
    </alternativeName>
    <alternativeName>
        <fullName>End-binding protein 1</fullName>
        <shortName>EB1</shortName>
    </alternativeName>
</protein>
<accession>Q66HR2</accession>
<evidence type="ECO:0000250" key="1">
    <source>
        <dbReference type="UniProtKB" id="Q15691"/>
    </source>
</evidence>
<evidence type="ECO:0000250" key="2">
    <source>
        <dbReference type="UniProtKB" id="Q61166"/>
    </source>
</evidence>
<evidence type="ECO:0000255" key="3">
    <source>
        <dbReference type="PROSITE-ProRule" id="PRU00044"/>
    </source>
</evidence>
<evidence type="ECO:0000255" key="4">
    <source>
        <dbReference type="PROSITE-ProRule" id="PRU00576"/>
    </source>
</evidence>
<evidence type="ECO:0000256" key="5">
    <source>
        <dbReference type="SAM" id="MobiDB-lite"/>
    </source>
</evidence>
<evidence type="ECO:0000269" key="6">
    <source>
    </source>
</evidence>
<evidence type="ECO:0000269" key="7">
    <source>
    </source>
</evidence>
<evidence type="ECO:0000269" key="8">
    <source ref="2"/>
</evidence>
<evidence type="ECO:0000305" key="9"/>
<evidence type="ECO:0000305" key="10">
    <source>
    </source>
</evidence>
<feature type="initiator methionine" description="Removed" evidence="8">
    <location>
        <position position="1"/>
    </location>
</feature>
<feature type="chain" id="PRO_0000213419" description="Microtubule-associated protein RP/EB family member 1">
    <location>
        <begin position="2"/>
        <end position="268"/>
    </location>
</feature>
<feature type="domain" description="Calponin-homology (CH)" evidence="3">
    <location>
        <begin position="14"/>
        <end position="116"/>
    </location>
</feature>
<feature type="domain" description="EB1 C-terminal" evidence="4">
    <location>
        <begin position="185"/>
        <end position="255"/>
    </location>
</feature>
<feature type="region of interest" description="Interaction with MTUS2/TIP150" evidence="1">
    <location>
        <begin position="124"/>
        <end position="268"/>
    </location>
</feature>
<feature type="region of interest" description="Disordered" evidence="5">
    <location>
        <begin position="146"/>
        <end position="191"/>
    </location>
</feature>
<feature type="region of interest" description="Interaction with APC" evidence="1">
    <location>
        <begin position="206"/>
        <end position="211"/>
    </location>
</feature>
<feature type="region of interest" description="DCTN1-binding" evidence="1">
    <location>
        <begin position="208"/>
        <end position="268"/>
    </location>
</feature>
<feature type="region of interest" description="APC-binding" evidence="1">
    <location>
        <begin position="220"/>
        <end position="242"/>
    </location>
</feature>
<feature type="region of interest" description="Interaction with SKA1" evidence="1">
    <location>
        <begin position="232"/>
        <end position="255"/>
    </location>
</feature>
<feature type="modified residue" description="N-acetylalanine" evidence="8">
    <location>
        <position position="2"/>
    </location>
</feature>
<feature type="modified residue" description="N6-crotonyllysine" evidence="1">
    <location>
        <position position="66"/>
    </location>
</feature>
<feature type="modified residue" description="Phosphotyrosine" evidence="1">
    <location>
        <position position="124"/>
    </location>
</feature>
<feature type="modified residue" description="Phosphoserine" evidence="1">
    <location>
        <position position="155"/>
    </location>
</feature>
<feature type="modified residue" description="N6-acetyllysine" evidence="1">
    <location>
        <position position="220"/>
    </location>
</feature>
<reference key="1">
    <citation type="journal article" date="2004" name="Genome Res.">
        <title>The status, quality, and expansion of the NIH full-length cDNA project: the Mammalian Gene Collection (MGC).</title>
        <authorList>
            <consortium name="The MGC Project Team"/>
        </authorList>
    </citation>
    <scope>NUCLEOTIDE SEQUENCE [LARGE SCALE MRNA]</scope>
    <source>
        <tissue>Heart</tissue>
    </source>
</reference>
<reference key="2">
    <citation type="submission" date="2006-08" db="UniProtKB">
        <authorList>
            <person name="Bienvenut W.V."/>
            <person name="von Kriegsheim A.F."/>
            <person name="Kolch W."/>
        </authorList>
    </citation>
    <scope>PROTEIN SEQUENCE OF 2-17; 67-98; 113-150; 182-201 AND 205-214</scope>
    <scope>CLEAVAGE OF INITIATOR METHIONINE</scope>
    <scope>ACETYLATION AT ALA-2</scope>
    <scope>IDENTIFICATION BY MASS SPECTROMETRY</scope>
    <source>
        <tissue>Pheochromocytoma</tissue>
    </source>
</reference>
<reference key="3">
    <citation type="journal article" date="2009" name="Mol. Biol. Cell">
        <title>Interaction of CDK5RAP2 with EB1 to track growing microtubule tips and to regulate microtubule dynamics.</title>
        <authorList>
            <person name="Fong K.W."/>
            <person name="Hau S.Y."/>
            <person name="Kho Y.S."/>
            <person name="Jia Y."/>
            <person name="He L."/>
            <person name="Qi R.Z."/>
        </authorList>
    </citation>
    <scope>LACK OF INTERACTION WITH MAPRE1</scope>
</reference>
<reference key="4">
    <citation type="journal article" date="2011" name="J. Cell Biol.">
        <title>Cdk-mediated phosphorylation of the Kvbeta2 auxiliary subunit regulates Kv1 channel axonal targeting.</title>
        <authorList>
            <person name="Vacher H."/>
            <person name="Yang J.W."/>
            <person name="Cerda O."/>
            <person name="Autillo-Touati A."/>
            <person name="Dargent B."/>
            <person name="Trimmer J.S."/>
        </authorList>
    </citation>
    <scope>INTERACTION WITH KCNAB2</scope>
</reference>
<gene>
    <name type="primary">Mapre1</name>
</gene>
<keyword id="KW-0007">Acetylation</keyword>
<keyword id="KW-0131">Cell cycle</keyword>
<keyword id="KW-0132">Cell division</keyword>
<keyword id="KW-0963">Cytoplasm</keyword>
<keyword id="KW-0206">Cytoskeleton</keyword>
<keyword id="KW-0903">Direct protein sequencing</keyword>
<keyword id="KW-0333">Golgi apparatus</keyword>
<keyword id="KW-0493">Microtubule</keyword>
<keyword id="KW-0498">Mitosis</keyword>
<keyword id="KW-0597">Phosphoprotein</keyword>
<keyword id="KW-1185">Reference proteome</keyword>
<sequence>MAVNVYSTSVTSDNLSRHDMLAWINESLQLNLTKIEQLCSGAAYCQFMDMLFPGSIALKKVKFQAKLEHEYIQNFKILQAGFKRMGVDKIIPVDKLVKGKFQDNFEFVQWFKKFFDANYDGKEYDPVAARQGQETAVAPSLVAPALSKPKKPLGSGSAAPQRPIATQRTTAAPKAGPGMVRKNPGMGNGDDEAAELMQQVKVLKLTVEDLEKERDFYFGKLRNIELICQENEGENDPVLQRIVDILYATDEGFVIPDEGGPQEEQEEY</sequence>
<name>MARE1_RAT</name>